<gene>
    <name evidence="1" type="primary">murC</name>
    <name type="ordered locus">KPN78578_00940</name>
    <name type="ORF">KPN_00095</name>
</gene>
<accession>A6T4N4</accession>
<comment type="function">
    <text evidence="1">Cell wall formation.</text>
</comment>
<comment type="catalytic activity">
    <reaction evidence="1">
        <text>UDP-N-acetyl-alpha-D-muramate + L-alanine + ATP = UDP-N-acetyl-alpha-D-muramoyl-L-alanine + ADP + phosphate + H(+)</text>
        <dbReference type="Rhea" id="RHEA:23372"/>
        <dbReference type="ChEBI" id="CHEBI:15378"/>
        <dbReference type="ChEBI" id="CHEBI:30616"/>
        <dbReference type="ChEBI" id="CHEBI:43474"/>
        <dbReference type="ChEBI" id="CHEBI:57972"/>
        <dbReference type="ChEBI" id="CHEBI:70757"/>
        <dbReference type="ChEBI" id="CHEBI:83898"/>
        <dbReference type="ChEBI" id="CHEBI:456216"/>
        <dbReference type="EC" id="6.3.2.8"/>
    </reaction>
</comment>
<comment type="pathway">
    <text evidence="1">Cell wall biogenesis; peptidoglycan biosynthesis.</text>
</comment>
<comment type="subcellular location">
    <subcellularLocation>
        <location evidence="1">Cytoplasm</location>
    </subcellularLocation>
</comment>
<comment type="similarity">
    <text evidence="1">Belongs to the MurCDEF family.</text>
</comment>
<organism>
    <name type="scientific">Klebsiella pneumoniae subsp. pneumoniae (strain ATCC 700721 / MGH 78578)</name>
    <dbReference type="NCBI Taxonomy" id="272620"/>
    <lineage>
        <taxon>Bacteria</taxon>
        <taxon>Pseudomonadati</taxon>
        <taxon>Pseudomonadota</taxon>
        <taxon>Gammaproteobacteria</taxon>
        <taxon>Enterobacterales</taxon>
        <taxon>Enterobacteriaceae</taxon>
        <taxon>Klebsiella/Raoultella group</taxon>
        <taxon>Klebsiella</taxon>
        <taxon>Klebsiella pneumoniae complex</taxon>
    </lineage>
</organism>
<reference key="1">
    <citation type="submission" date="2006-09" db="EMBL/GenBank/DDBJ databases">
        <authorList>
            <consortium name="The Klebsiella pneumonia Genome Sequencing Project"/>
            <person name="McClelland M."/>
            <person name="Sanderson E.K."/>
            <person name="Spieth J."/>
            <person name="Clifton W.S."/>
            <person name="Latreille P."/>
            <person name="Sabo A."/>
            <person name="Pepin K."/>
            <person name="Bhonagiri V."/>
            <person name="Porwollik S."/>
            <person name="Ali J."/>
            <person name="Wilson R.K."/>
        </authorList>
    </citation>
    <scope>NUCLEOTIDE SEQUENCE [LARGE SCALE GENOMIC DNA]</scope>
    <source>
        <strain>ATCC 700721 / MGH 78578</strain>
    </source>
</reference>
<feature type="chain" id="PRO_1000004354" description="UDP-N-acetylmuramate--L-alanine ligase">
    <location>
        <begin position="1"/>
        <end position="491"/>
    </location>
</feature>
<feature type="binding site" evidence="1">
    <location>
        <begin position="126"/>
        <end position="132"/>
    </location>
    <ligand>
        <name>ATP</name>
        <dbReference type="ChEBI" id="CHEBI:30616"/>
    </ligand>
</feature>
<sequence>MNTQDLAKLRSIVPEMRRVRHIHFVGIGGAGMGGIAEVLANEGYQISGSDLAPNPVTQQLSQLGATIYFNHRPENVRDASVVVVSSAISADNPEIVAAHEARIPVIRRAEMLAELMRFRHGIAIAGTHGKTTTTAMVSSIYAEAGLDPTFVNGGLVKAAGVHARLGHSRYLIAEADESDASFLHLQPMVAIVTNIEADHMDTYHGDFENLKQTFINFLHNLPFYGRAVMCVDDPVIRELLPRVGRQITTYGFSDDADVRVEDYRQVGAQGHFRLVRQDKAILQVTLNAPGRHNALNAAAAVAVATEEGIDDRAILRALESFQGTGRRFDFLGEFPLAEVNGKPGSAMLIDDYGHHPTEVDATIKAARAGWPDKNLVMVFQPHRYTRTRDLYDDFANVLTQVDALLMLDVYPAGEAPIPGADSRSLCRTIRGRGKVDPILVPDSTQAAEMLASVLTGNDLVLVQGAGNIGKIARHLAEIKLIPQKTEEERHG</sequence>
<dbReference type="EC" id="6.3.2.8" evidence="1"/>
<dbReference type="EMBL" id="CP000647">
    <property type="protein sequence ID" value="ABR75555.1"/>
    <property type="molecule type" value="Genomic_DNA"/>
</dbReference>
<dbReference type="RefSeq" id="WP_004192000.1">
    <property type="nucleotide sequence ID" value="NC_009648.1"/>
</dbReference>
<dbReference type="SMR" id="A6T4N4"/>
<dbReference type="STRING" id="272620.KPN_00095"/>
<dbReference type="BindingDB" id="A6T4N4"/>
<dbReference type="PaxDb" id="272620-KPN_00095"/>
<dbReference type="EnsemblBacteria" id="ABR75555">
    <property type="protein sequence ID" value="ABR75555"/>
    <property type="gene ID" value="KPN_00095"/>
</dbReference>
<dbReference type="KEGG" id="kpn:KPN_00095"/>
<dbReference type="HOGENOM" id="CLU_028104_2_2_6"/>
<dbReference type="UniPathway" id="UPA00219"/>
<dbReference type="Proteomes" id="UP000000265">
    <property type="component" value="Chromosome"/>
</dbReference>
<dbReference type="GO" id="GO:0005737">
    <property type="term" value="C:cytoplasm"/>
    <property type="evidence" value="ECO:0007669"/>
    <property type="project" value="UniProtKB-SubCell"/>
</dbReference>
<dbReference type="GO" id="GO:0005524">
    <property type="term" value="F:ATP binding"/>
    <property type="evidence" value="ECO:0007669"/>
    <property type="project" value="UniProtKB-UniRule"/>
</dbReference>
<dbReference type="GO" id="GO:0008763">
    <property type="term" value="F:UDP-N-acetylmuramate-L-alanine ligase activity"/>
    <property type="evidence" value="ECO:0007669"/>
    <property type="project" value="UniProtKB-UniRule"/>
</dbReference>
<dbReference type="GO" id="GO:0051301">
    <property type="term" value="P:cell division"/>
    <property type="evidence" value="ECO:0007669"/>
    <property type="project" value="UniProtKB-KW"/>
</dbReference>
<dbReference type="GO" id="GO:0071555">
    <property type="term" value="P:cell wall organization"/>
    <property type="evidence" value="ECO:0007669"/>
    <property type="project" value="UniProtKB-KW"/>
</dbReference>
<dbReference type="GO" id="GO:0009252">
    <property type="term" value="P:peptidoglycan biosynthetic process"/>
    <property type="evidence" value="ECO:0007669"/>
    <property type="project" value="UniProtKB-UniRule"/>
</dbReference>
<dbReference type="GO" id="GO:0008360">
    <property type="term" value="P:regulation of cell shape"/>
    <property type="evidence" value="ECO:0007669"/>
    <property type="project" value="UniProtKB-KW"/>
</dbReference>
<dbReference type="FunFam" id="3.40.1190.10:FF:000001">
    <property type="entry name" value="UDP-N-acetylmuramate--L-alanine ligase"/>
    <property type="match status" value="1"/>
</dbReference>
<dbReference type="FunFam" id="3.40.50.720:FF:000046">
    <property type="entry name" value="UDP-N-acetylmuramate--L-alanine ligase"/>
    <property type="match status" value="1"/>
</dbReference>
<dbReference type="FunFam" id="3.90.190.20:FF:000001">
    <property type="entry name" value="UDP-N-acetylmuramate--L-alanine ligase"/>
    <property type="match status" value="1"/>
</dbReference>
<dbReference type="Gene3D" id="3.90.190.20">
    <property type="entry name" value="Mur ligase, C-terminal domain"/>
    <property type="match status" value="1"/>
</dbReference>
<dbReference type="Gene3D" id="3.40.1190.10">
    <property type="entry name" value="Mur-like, catalytic domain"/>
    <property type="match status" value="1"/>
</dbReference>
<dbReference type="Gene3D" id="3.40.50.720">
    <property type="entry name" value="NAD(P)-binding Rossmann-like Domain"/>
    <property type="match status" value="1"/>
</dbReference>
<dbReference type="HAMAP" id="MF_00046">
    <property type="entry name" value="MurC"/>
    <property type="match status" value="1"/>
</dbReference>
<dbReference type="InterPro" id="IPR036565">
    <property type="entry name" value="Mur-like_cat_sf"/>
</dbReference>
<dbReference type="InterPro" id="IPR004101">
    <property type="entry name" value="Mur_ligase_C"/>
</dbReference>
<dbReference type="InterPro" id="IPR036615">
    <property type="entry name" value="Mur_ligase_C_dom_sf"/>
</dbReference>
<dbReference type="InterPro" id="IPR013221">
    <property type="entry name" value="Mur_ligase_cen"/>
</dbReference>
<dbReference type="InterPro" id="IPR000713">
    <property type="entry name" value="Mur_ligase_N"/>
</dbReference>
<dbReference type="InterPro" id="IPR050061">
    <property type="entry name" value="MurCDEF_pg_biosynth"/>
</dbReference>
<dbReference type="InterPro" id="IPR005758">
    <property type="entry name" value="UDP-N-AcMur_Ala_ligase_MurC"/>
</dbReference>
<dbReference type="NCBIfam" id="TIGR01082">
    <property type="entry name" value="murC"/>
    <property type="match status" value="1"/>
</dbReference>
<dbReference type="PANTHER" id="PTHR43445:SF3">
    <property type="entry name" value="UDP-N-ACETYLMURAMATE--L-ALANINE LIGASE"/>
    <property type="match status" value="1"/>
</dbReference>
<dbReference type="PANTHER" id="PTHR43445">
    <property type="entry name" value="UDP-N-ACETYLMURAMATE--L-ALANINE LIGASE-RELATED"/>
    <property type="match status" value="1"/>
</dbReference>
<dbReference type="Pfam" id="PF01225">
    <property type="entry name" value="Mur_ligase"/>
    <property type="match status" value="1"/>
</dbReference>
<dbReference type="Pfam" id="PF02875">
    <property type="entry name" value="Mur_ligase_C"/>
    <property type="match status" value="1"/>
</dbReference>
<dbReference type="Pfam" id="PF08245">
    <property type="entry name" value="Mur_ligase_M"/>
    <property type="match status" value="1"/>
</dbReference>
<dbReference type="SUPFAM" id="SSF51984">
    <property type="entry name" value="MurCD N-terminal domain"/>
    <property type="match status" value="1"/>
</dbReference>
<dbReference type="SUPFAM" id="SSF53623">
    <property type="entry name" value="MurD-like peptide ligases, catalytic domain"/>
    <property type="match status" value="1"/>
</dbReference>
<dbReference type="SUPFAM" id="SSF53244">
    <property type="entry name" value="MurD-like peptide ligases, peptide-binding domain"/>
    <property type="match status" value="1"/>
</dbReference>
<protein>
    <recommendedName>
        <fullName evidence="1">UDP-N-acetylmuramate--L-alanine ligase</fullName>
        <ecNumber evidence="1">6.3.2.8</ecNumber>
    </recommendedName>
    <alternativeName>
        <fullName evidence="1">UDP-N-acetylmuramoyl-L-alanine synthetase</fullName>
    </alternativeName>
</protein>
<name>MURC_KLEP7</name>
<evidence type="ECO:0000255" key="1">
    <source>
        <dbReference type="HAMAP-Rule" id="MF_00046"/>
    </source>
</evidence>
<proteinExistence type="inferred from homology"/>
<keyword id="KW-0067">ATP-binding</keyword>
<keyword id="KW-0131">Cell cycle</keyword>
<keyword id="KW-0132">Cell division</keyword>
<keyword id="KW-0133">Cell shape</keyword>
<keyword id="KW-0961">Cell wall biogenesis/degradation</keyword>
<keyword id="KW-0963">Cytoplasm</keyword>
<keyword id="KW-0436">Ligase</keyword>
<keyword id="KW-0547">Nucleotide-binding</keyword>
<keyword id="KW-0573">Peptidoglycan synthesis</keyword>